<evidence type="ECO:0000250" key="1"/>
<evidence type="ECO:0000255" key="2"/>
<evidence type="ECO:0000255" key="3">
    <source>
        <dbReference type="PROSITE-ProRule" id="PRU00186"/>
    </source>
</evidence>
<evidence type="ECO:0000256" key="4">
    <source>
        <dbReference type="SAM" id="MobiDB-lite"/>
    </source>
</evidence>
<evidence type="ECO:0000305" key="5"/>
<comment type="subcellular location">
    <subcellularLocation>
        <location evidence="1">Mitochondrion membrane</location>
        <topology evidence="1">Single-pass membrane protein</topology>
    </subcellularLocation>
</comment>
<comment type="similarity">
    <text evidence="5">Belongs to the AIM34 family.</text>
</comment>
<gene>
    <name type="primary">AIM34</name>
    <name type="ordered locus">YALI0B08118g</name>
</gene>
<keyword id="KW-0472">Membrane</keyword>
<keyword id="KW-0496">Mitochondrion</keyword>
<keyword id="KW-1185">Reference proteome</keyword>
<keyword id="KW-0809">Transit peptide</keyword>
<keyword id="KW-0812">Transmembrane</keyword>
<keyword id="KW-1133">Transmembrane helix</keyword>
<reference key="1">
    <citation type="journal article" date="2004" name="Nature">
        <title>Genome evolution in yeasts.</title>
        <authorList>
            <person name="Dujon B."/>
            <person name="Sherman D."/>
            <person name="Fischer G."/>
            <person name="Durrens P."/>
            <person name="Casaregola S."/>
            <person name="Lafontaine I."/>
            <person name="de Montigny J."/>
            <person name="Marck C."/>
            <person name="Neuveglise C."/>
            <person name="Talla E."/>
            <person name="Goffard N."/>
            <person name="Frangeul L."/>
            <person name="Aigle M."/>
            <person name="Anthouard V."/>
            <person name="Babour A."/>
            <person name="Barbe V."/>
            <person name="Barnay S."/>
            <person name="Blanchin S."/>
            <person name="Beckerich J.-M."/>
            <person name="Beyne E."/>
            <person name="Bleykasten C."/>
            <person name="Boisrame A."/>
            <person name="Boyer J."/>
            <person name="Cattolico L."/>
            <person name="Confanioleri F."/>
            <person name="de Daruvar A."/>
            <person name="Despons L."/>
            <person name="Fabre E."/>
            <person name="Fairhead C."/>
            <person name="Ferry-Dumazet H."/>
            <person name="Groppi A."/>
            <person name="Hantraye F."/>
            <person name="Hennequin C."/>
            <person name="Jauniaux N."/>
            <person name="Joyet P."/>
            <person name="Kachouri R."/>
            <person name="Kerrest A."/>
            <person name="Koszul R."/>
            <person name="Lemaire M."/>
            <person name="Lesur I."/>
            <person name="Ma L."/>
            <person name="Muller H."/>
            <person name="Nicaud J.-M."/>
            <person name="Nikolski M."/>
            <person name="Oztas S."/>
            <person name="Ozier-Kalogeropoulos O."/>
            <person name="Pellenz S."/>
            <person name="Potier S."/>
            <person name="Richard G.-F."/>
            <person name="Straub M.-L."/>
            <person name="Suleau A."/>
            <person name="Swennen D."/>
            <person name="Tekaia F."/>
            <person name="Wesolowski-Louvel M."/>
            <person name="Westhof E."/>
            <person name="Wirth B."/>
            <person name="Zeniou-Meyer M."/>
            <person name="Zivanovic Y."/>
            <person name="Bolotin-Fukuhara M."/>
            <person name="Thierry A."/>
            <person name="Bouchier C."/>
            <person name="Caudron B."/>
            <person name="Scarpelli C."/>
            <person name="Gaillardin C."/>
            <person name="Weissenbach J."/>
            <person name="Wincker P."/>
            <person name="Souciet J.-L."/>
        </authorList>
    </citation>
    <scope>NUCLEOTIDE SEQUENCE [LARGE SCALE GENOMIC DNA]</scope>
    <source>
        <strain>CLIB 122 / E 150</strain>
    </source>
</reference>
<sequence>MLRIARTLNRSPLASPLARGIHQSTPKTNPSPLLSSTPTQYSSMKVASLKDECRRRGLRLGGRKADLIERLASHDFSTVSKRAVVSTPNPVAAPAQTATAAGATATLTRVRLITSSAPTLAQGDTSTIDFCKLPHTGMPADAPRIKIPTSPDAYGEVARYGSHAITNDRKVAESVAEDELHSKQPQEIHYASGHVVRSFAGDHSSETGDHDFSTNDKLVLGGIVGAVGFWWFLGLEGKVE</sequence>
<name>AIM34_YARLI</name>
<feature type="transit peptide" description="Mitochondrion" evidence="2">
    <location>
        <begin position="1"/>
        <end position="28"/>
    </location>
</feature>
<feature type="chain" id="PRO_0000399711" description="Altered inheritance of mitochondria protein 34, mitochondrial">
    <location>
        <begin position="29"/>
        <end position="240"/>
    </location>
</feature>
<feature type="transmembrane region" description="Helical" evidence="2">
    <location>
        <begin position="218"/>
        <end position="235"/>
    </location>
</feature>
<feature type="domain" description="SAP" evidence="3">
    <location>
        <begin position="41"/>
        <end position="75"/>
    </location>
</feature>
<feature type="region of interest" description="Disordered" evidence="4">
    <location>
        <begin position="13"/>
        <end position="48"/>
    </location>
</feature>
<feature type="compositionally biased region" description="Polar residues" evidence="4">
    <location>
        <begin position="22"/>
        <end position="45"/>
    </location>
</feature>
<accession>Q6CFD4</accession>
<dbReference type="EMBL" id="CR382128">
    <property type="protein sequence ID" value="CAG82869.1"/>
    <property type="molecule type" value="Genomic_DNA"/>
</dbReference>
<dbReference type="RefSeq" id="XP_500628.1">
    <property type="nucleotide sequence ID" value="XM_500628.1"/>
</dbReference>
<dbReference type="SMR" id="Q6CFD4"/>
<dbReference type="EnsemblFungi" id="CAG82869">
    <property type="protein sequence ID" value="CAG82869"/>
    <property type="gene ID" value="YALI0_B08118g"/>
</dbReference>
<dbReference type="KEGG" id="yli:2906983"/>
<dbReference type="VEuPathDB" id="FungiDB:YALI0_B08118g"/>
<dbReference type="HOGENOM" id="CLU_1157177_0_0_1"/>
<dbReference type="InParanoid" id="Q6CFD4"/>
<dbReference type="OrthoDB" id="23693at4891"/>
<dbReference type="Proteomes" id="UP000001300">
    <property type="component" value="Chromosome B"/>
</dbReference>
<dbReference type="GO" id="GO:0031966">
    <property type="term" value="C:mitochondrial membrane"/>
    <property type="evidence" value="ECO:0007669"/>
    <property type="project" value="UniProtKB-SubCell"/>
</dbReference>
<dbReference type="Gene3D" id="1.10.720.30">
    <property type="entry name" value="SAP domain"/>
    <property type="match status" value="1"/>
</dbReference>
<dbReference type="InterPro" id="IPR003034">
    <property type="entry name" value="SAP_dom"/>
</dbReference>
<dbReference type="InterPro" id="IPR036361">
    <property type="entry name" value="SAP_dom_sf"/>
</dbReference>
<dbReference type="Pfam" id="PF02037">
    <property type="entry name" value="SAP"/>
    <property type="match status" value="1"/>
</dbReference>
<dbReference type="SMART" id="SM00513">
    <property type="entry name" value="SAP"/>
    <property type="match status" value="1"/>
</dbReference>
<dbReference type="SUPFAM" id="SSF68906">
    <property type="entry name" value="SAP domain"/>
    <property type="match status" value="1"/>
</dbReference>
<dbReference type="PROSITE" id="PS50800">
    <property type="entry name" value="SAP"/>
    <property type="match status" value="1"/>
</dbReference>
<organism>
    <name type="scientific">Yarrowia lipolytica (strain CLIB 122 / E 150)</name>
    <name type="common">Yeast</name>
    <name type="synonym">Candida lipolytica</name>
    <dbReference type="NCBI Taxonomy" id="284591"/>
    <lineage>
        <taxon>Eukaryota</taxon>
        <taxon>Fungi</taxon>
        <taxon>Dikarya</taxon>
        <taxon>Ascomycota</taxon>
        <taxon>Saccharomycotina</taxon>
        <taxon>Dipodascomycetes</taxon>
        <taxon>Dipodascales</taxon>
        <taxon>Dipodascales incertae sedis</taxon>
        <taxon>Yarrowia</taxon>
    </lineage>
</organism>
<proteinExistence type="inferred from homology"/>
<protein>
    <recommendedName>
        <fullName>Altered inheritance of mitochondria protein 34, mitochondrial</fullName>
    </recommendedName>
</protein>